<evidence type="ECO:0000255" key="1">
    <source>
        <dbReference type="HAMAP-Rule" id="MF_01820"/>
    </source>
</evidence>
<evidence type="ECO:0000255" key="2">
    <source>
        <dbReference type="PROSITE-ProRule" id="PRU01058"/>
    </source>
</evidence>
<name>RSGA_CALS4</name>
<reference key="1">
    <citation type="journal article" date="2002" name="Genome Res.">
        <title>A complete sequence of the T. tengcongensis genome.</title>
        <authorList>
            <person name="Bao Q."/>
            <person name="Tian Y."/>
            <person name="Li W."/>
            <person name="Xu Z."/>
            <person name="Xuan Z."/>
            <person name="Hu S."/>
            <person name="Dong W."/>
            <person name="Yang J."/>
            <person name="Chen Y."/>
            <person name="Xue Y."/>
            <person name="Xu Y."/>
            <person name="Lai X."/>
            <person name="Huang L."/>
            <person name="Dong X."/>
            <person name="Ma Y."/>
            <person name="Ling L."/>
            <person name="Tan H."/>
            <person name="Chen R."/>
            <person name="Wang J."/>
            <person name="Yu J."/>
            <person name="Yang H."/>
        </authorList>
    </citation>
    <scope>NUCLEOTIDE SEQUENCE [LARGE SCALE GENOMIC DNA]</scope>
    <source>
        <strain>DSM 15242 / JCM 11007 / NBRC 100824 / MB4</strain>
    </source>
</reference>
<protein>
    <recommendedName>
        <fullName evidence="1">Small ribosomal subunit biogenesis GTPase RsgA</fullName>
        <ecNumber evidence="1">3.6.1.-</ecNumber>
    </recommendedName>
</protein>
<organism>
    <name type="scientific">Caldanaerobacter subterraneus subsp. tengcongensis (strain DSM 15242 / JCM 11007 / NBRC 100824 / MB4)</name>
    <name type="common">Thermoanaerobacter tengcongensis</name>
    <dbReference type="NCBI Taxonomy" id="273068"/>
    <lineage>
        <taxon>Bacteria</taxon>
        <taxon>Bacillati</taxon>
        <taxon>Bacillota</taxon>
        <taxon>Clostridia</taxon>
        <taxon>Thermoanaerobacterales</taxon>
        <taxon>Thermoanaerobacteraceae</taxon>
        <taxon>Caldanaerobacter</taxon>
    </lineage>
</organism>
<dbReference type="EC" id="3.6.1.-" evidence="1"/>
<dbReference type="EMBL" id="AE008691">
    <property type="protein sequence ID" value="AAM24717.1"/>
    <property type="molecule type" value="Genomic_DNA"/>
</dbReference>
<dbReference type="RefSeq" id="WP_011025759.1">
    <property type="nucleotide sequence ID" value="NC_003869.1"/>
</dbReference>
<dbReference type="SMR" id="Q8R9T7"/>
<dbReference type="STRING" id="273068.TTE1499"/>
<dbReference type="KEGG" id="tte:TTE1499"/>
<dbReference type="eggNOG" id="COG1162">
    <property type="taxonomic scope" value="Bacteria"/>
</dbReference>
<dbReference type="HOGENOM" id="CLU_033617_2_1_9"/>
<dbReference type="OrthoDB" id="9809485at2"/>
<dbReference type="Proteomes" id="UP000000555">
    <property type="component" value="Chromosome"/>
</dbReference>
<dbReference type="GO" id="GO:0005737">
    <property type="term" value="C:cytoplasm"/>
    <property type="evidence" value="ECO:0007669"/>
    <property type="project" value="UniProtKB-SubCell"/>
</dbReference>
<dbReference type="GO" id="GO:0005525">
    <property type="term" value="F:GTP binding"/>
    <property type="evidence" value="ECO:0007669"/>
    <property type="project" value="UniProtKB-UniRule"/>
</dbReference>
<dbReference type="GO" id="GO:0003924">
    <property type="term" value="F:GTPase activity"/>
    <property type="evidence" value="ECO:0007669"/>
    <property type="project" value="UniProtKB-UniRule"/>
</dbReference>
<dbReference type="GO" id="GO:0046872">
    <property type="term" value="F:metal ion binding"/>
    <property type="evidence" value="ECO:0007669"/>
    <property type="project" value="UniProtKB-KW"/>
</dbReference>
<dbReference type="GO" id="GO:0019843">
    <property type="term" value="F:rRNA binding"/>
    <property type="evidence" value="ECO:0007669"/>
    <property type="project" value="UniProtKB-KW"/>
</dbReference>
<dbReference type="GO" id="GO:0042274">
    <property type="term" value="P:ribosomal small subunit biogenesis"/>
    <property type="evidence" value="ECO:0007669"/>
    <property type="project" value="UniProtKB-UniRule"/>
</dbReference>
<dbReference type="CDD" id="cd04466">
    <property type="entry name" value="S1_YloQ_GTPase"/>
    <property type="match status" value="1"/>
</dbReference>
<dbReference type="CDD" id="cd01854">
    <property type="entry name" value="YjeQ_EngC"/>
    <property type="match status" value="1"/>
</dbReference>
<dbReference type="Gene3D" id="2.40.50.140">
    <property type="entry name" value="Nucleic acid-binding proteins"/>
    <property type="match status" value="1"/>
</dbReference>
<dbReference type="Gene3D" id="3.40.50.300">
    <property type="entry name" value="P-loop containing nucleotide triphosphate hydrolases"/>
    <property type="match status" value="1"/>
</dbReference>
<dbReference type="Gene3D" id="1.10.40.50">
    <property type="entry name" value="Probable gtpase engc, domain 3"/>
    <property type="match status" value="1"/>
</dbReference>
<dbReference type="HAMAP" id="MF_01820">
    <property type="entry name" value="GTPase_RsgA"/>
    <property type="match status" value="1"/>
</dbReference>
<dbReference type="InterPro" id="IPR030378">
    <property type="entry name" value="G_CP_dom"/>
</dbReference>
<dbReference type="InterPro" id="IPR012340">
    <property type="entry name" value="NA-bd_OB-fold"/>
</dbReference>
<dbReference type="InterPro" id="IPR027417">
    <property type="entry name" value="P-loop_NTPase"/>
</dbReference>
<dbReference type="InterPro" id="IPR004881">
    <property type="entry name" value="Ribosome_biogen_GTPase_RsgA"/>
</dbReference>
<dbReference type="InterPro" id="IPR010914">
    <property type="entry name" value="RsgA_GTPase_dom"/>
</dbReference>
<dbReference type="InterPro" id="IPR031944">
    <property type="entry name" value="RsgA_N"/>
</dbReference>
<dbReference type="NCBIfam" id="TIGR00157">
    <property type="entry name" value="ribosome small subunit-dependent GTPase A"/>
    <property type="match status" value="1"/>
</dbReference>
<dbReference type="PANTHER" id="PTHR32120">
    <property type="entry name" value="SMALL RIBOSOMAL SUBUNIT BIOGENESIS GTPASE RSGA"/>
    <property type="match status" value="1"/>
</dbReference>
<dbReference type="PANTHER" id="PTHR32120:SF11">
    <property type="entry name" value="SMALL RIBOSOMAL SUBUNIT BIOGENESIS GTPASE RSGA 1, MITOCHONDRIAL-RELATED"/>
    <property type="match status" value="1"/>
</dbReference>
<dbReference type="Pfam" id="PF03193">
    <property type="entry name" value="RsgA_GTPase"/>
    <property type="match status" value="1"/>
</dbReference>
<dbReference type="Pfam" id="PF16745">
    <property type="entry name" value="RsgA_N"/>
    <property type="match status" value="1"/>
</dbReference>
<dbReference type="SUPFAM" id="SSF50249">
    <property type="entry name" value="Nucleic acid-binding proteins"/>
    <property type="match status" value="1"/>
</dbReference>
<dbReference type="SUPFAM" id="SSF52540">
    <property type="entry name" value="P-loop containing nucleoside triphosphate hydrolases"/>
    <property type="match status" value="1"/>
</dbReference>
<dbReference type="PROSITE" id="PS50936">
    <property type="entry name" value="ENGC_GTPASE"/>
    <property type="match status" value="1"/>
</dbReference>
<dbReference type="PROSITE" id="PS51721">
    <property type="entry name" value="G_CP"/>
    <property type="match status" value="1"/>
</dbReference>
<comment type="function">
    <text evidence="1">One of several proteins that assist in the late maturation steps of the functional core of the 30S ribosomal subunit. Helps release RbfA from mature subunits. May play a role in the assembly of ribosomal proteins into the subunit. Circularly permuted GTPase that catalyzes slow GTP hydrolysis, GTPase activity is stimulated by the 30S ribosomal subunit.</text>
</comment>
<comment type="cofactor">
    <cofactor evidence="1">
        <name>Zn(2+)</name>
        <dbReference type="ChEBI" id="CHEBI:29105"/>
    </cofactor>
    <text evidence="1">Binds 1 zinc ion per subunit.</text>
</comment>
<comment type="subunit">
    <text evidence="1">Monomer. Associates with 30S ribosomal subunit, binds 16S rRNA.</text>
</comment>
<comment type="subcellular location">
    <subcellularLocation>
        <location evidence="1">Cytoplasm</location>
    </subcellularLocation>
</comment>
<comment type="similarity">
    <text evidence="1">Belongs to the TRAFAC class YlqF/YawG GTPase family. RsgA subfamily.</text>
</comment>
<proteinExistence type="inferred from homology"/>
<keyword id="KW-0963">Cytoplasm</keyword>
<keyword id="KW-0342">GTP-binding</keyword>
<keyword id="KW-0378">Hydrolase</keyword>
<keyword id="KW-0479">Metal-binding</keyword>
<keyword id="KW-0547">Nucleotide-binding</keyword>
<keyword id="KW-1185">Reference proteome</keyword>
<keyword id="KW-0690">Ribosome biogenesis</keyword>
<keyword id="KW-0694">RNA-binding</keyword>
<keyword id="KW-0699">rRNA-binding</keyword>
<keyword id="KW-0862">Zinc</keyword>
<gene>
    <name evidence="1" type="primary">rsgA</name>
    <name type="ordered locus">TTE1499</name>
</gene>
<accession>Q8R9T7</accession>
<feature type="chain" id="PRO_0000171537" description="Small ribosomal subunit biogenesis GTPase RsgA">
    <location>
        <begin position="1"/>
        <end position="295"/>
    </location>
</feature>
<feature type="domain" description="CP-type G" evidence="2">
    <location>
        <begin position="65"/>
        <end position="223"/>
    </location>
</feature>
<feature type="binding site" evidence="1">
    <location>
        <begin position="114"/>
        <end position="117"/>
    </location>
    <ligand>
        <name>GTP</name>
        <dbReference type="ChEBI" id="CHEBI:37565"/>
    </ligand>
</feature>
<feature type="binding site" evidence="1">
    <location>
        <begin position="165"/>
        <end position="173"/>
    </location>
    <ligand>
        <name>GTP</name>
        <dbReference type="ChEBI" id="CHEBI:37565"/>
    </ligand>
</feature>
<feature type="binding site" evidence="1">
    <location>
        <position position="246"/>
    </location>
    <ligand>
        <name>Zn(2+)</name>
        <dbReference type="ChEBI" id="CHEBI:29105"/>
    </ligand>
</feature>
<feature type="binding site" evidence="1">
    <location>
        <position position="251"/>
    </location>
    <ligand>
        <name>Zn(2+)</name>
        <dbReference type="ChEBI" id="CHEBI:29105"/>
    </ligand>
</feature>
<feature type="binding site" evidence="1">
    <location>
        <position position="253"/>
    </location>
    <ligand>
        <name>Zn(2+)</name>
        <dbReference type="ChEBI" id="CHEBI:29105"/>
    </ligand>
</feature>
<feature type="binding site" evidence="1">
    <location>
        <position position="259"/>
    </location>
    <ligand>
        <name>Zn(2+)</name>
        <dbReference type="ChEBI" id="CHEBI:29105"/>
    </ligand>
</feature>
<sequence length="295" mass="33703">MERIQGRIVRGIAGFYYVATERGIIECRARGKFRKDNIIPLVGDIAEVQLVNEKEGYILEILPRKNQLVRPPVANVDQAIIVFAISKPEINRVLLDKMIVVAEINKIEPVVCINKVDMEKREEVENLINVYRKIGYKAVGTSAVTGEGMEELKSYLKDKISFFAGPSGVGKSSLINLIQSNIRLKTGELSEKLGRGRHTTRSVEFLPLDFGGYVLDTPGFTALEIDIPKEELRNYFREFIEFQENCRFNSCLHVNEPDCAVTEAVDEGIIDRQRYISYLTLLREVKEKEKRRYKN</sequence>